<sequence>MADLRLFTSESVTEGHPDKICDQISDSILDALLAVDEHSRVAVETLVTTGLVHVAGEVTTKGYVEIPALVRDTIVEIGYDSSDVSFDGTQCGVSVSIGAQSPDIAQGVDNALETRSERSQDDLDRQGAGDQGIMFGFATTETPQYMPLPIWLAHRLAERLAAVRKDGTLGYLRPDGKTQVTIGYEGYVPKSVQTVVLSTQHARDIPSQQLRADVIEQVIEPVMHAAGVETSHIRTLINPTGRFEIGGPKGDAGLTGRKIIVDTYGGASRHGGGAFSGKDPSKVDRSAAYALRWVAKNAVAAGLADRLEVQIAYAIGKAAPVGLYVETFGTAHVPDERIIHAIREVFDLRPAAIARDLDLLRPIYARTATYGHFGRELPDFTWERLDRVDDLRSAAGL</sequence>
<feature type="chain" id="PRO_0000174540" description="S-adenosylmethionine synthase">
    <location>
        <begin position="1"/>
        <end position="397"/>
    </location>
</feature>
<feature type="region of interest" description="Flexible loop" evidence="1">
    <location>
        <begin position="100"/>
        <end position="110"/>
    </location>
</feature>
<feature type="binding site" description="in other chain" evidence="1">
    <location>
        <position position="16"/>
    </location>
    <ligand>
        <name>ATP</name>
        <dbReference type="ChEBI" id="CHEBI:30616"/>
        <note>ligand shared between two neighboring subunits</note>
    </ligand>
</feature>
<feature type="binding site" evidence="1">
    <location>
        <position position="18"/>
    </location>
    <ligand>
        <name>Mg(2+)</name>
        <dbReference type="ChEBI" id="CHEBI:18420"/>
    </ligand>
</feature>
<feature type="binding site" evidence="1">
    <location>
        <position position="44"/>
    </location>
    <ligand>
        <name>K(+)</name>
        <dbReference type="ChEBI" id="CHEBI:29103"/>
    </ligand>
</feature>
<feature type="binding site" description="in other chain" evidence="1">
    <location>
        <position position="57"/>
    </location>
    <ligand>
        <name>L-methionine</name>
        <dbReference type="ChEBI" id="CHEBI:57844"/>
        <note>ligand shared between two neighboring subunits</note>
    </ligand>
</feature>
<feature type="binding site" description="in other chain" evidence="1">
    <location>
        <position position="100"/>
    </location>
    <ligand>
        <name>L-methionine</name>
        <dbReference type="ChEBI" id="CHEBI:57844"/>
        <note>ligand shared between two neighboring subunits</note>
    </ligand>
</feature>
<feature type="binding site" description="in other chain" evidence="1">
    <location>
        <begin position="175"/>
        <end position="177"/>
    </location>
    <ligand>
        <name>ATP</name>
        <dbReference type="ChEBI" id="CHEBI:30616"/>
        <note>ligand shared between two neighboring subunits</note>
    </ligand>
</feature>
<feature type="binding site" description="in other chain" evidence="1">
    <location>
        <begin position="242"/>
        <end position="243"/>
    </location>
    <ligand>
        <name>ATP</name>
        <dbReference type="ChEBI" id="CHEBI:30616"/>
        <note>ligand shared between two neighboring subunits</note>
    </ligand>
</feature>
<feature type="binding site" evidence="1">
    <location>
        <position position="251"/>
    </location>
    <ligand>
        <name>ATP</name>
        <dbReference type="ChEBI" id="CHEBI:30616"/>
        <note>ligand shared between two neighboring subunits</note>
    </ligand>
</feature>
<feature type="binding site" evidence="1">
    <location>
        <position position="251"/>
    </location>
    <ligand>
        <name>L-methionine</name>
        <dbReference type="ChEBI" id="CHEBI:57844"/>
        <note>ligand shared between two neighboring subunits</note>
    </ligand>
</feature>
<feature type="binding site" description="in other chain" evidence="1">
    <location>
        <begin position="257"/>
        <end position="258"/>
    </location>
    <ligand>
        <name>ATP</name>
        <dbReference type="ChEBI" id="CHEBI:30616"/>
        <note>ligand shared between two neighboring subunits</note>
    </ligand>
</feature>
<feature type="binding site" evidence="1">
    <location>
        <position position="274"/>
    </location>
    <ligand>
        <name>ATP</name>
        <dbReference type="ChEBI" id="CHEBI:30616"/>
        <note>ligand shared between two neighboring subunits</note>
    </ligand>
</feature>
<feature type="binding site" evidence="1">
    <location>
        <position position="278"/>
    </location>
    <ligand>
        <name>ATP</name>
        <dbReference type="ChEBI" id="CHEBI:30616"/>
        <note>ligand shared between two neighboring subunits</note>
    </ligand>
</feature>
<feature type="binding site" description="in other chain" evidence="1">
    <location>
        <position position="282"/>
    </location>
    <ligand>
        <name>L-methionine</name>
        <dbReference type="ChEBI" id="CHEBI:57844"/>
        <note>ligand shared between two neighboring subunits</note>
    </ligand>
</feature>
<evidence type="ECO:0000255" key="1">
    <source>
        <dbReference type="HAMAP-Rule" id="MF_00086"/>
    </source>
</evidence>
<reference key="1">
    <citation type="journal article" date="2004" name="Mol. Plant Microbe Interact.">
        <title>The genome sequence of the Gram-positive sugarcane pathogen Leifsonia xyli subsp. xyli.</title>
        <authorList>
            <person name="Monteiro-Vitorello C.B."/>
            <person name="Camargo L.E.A."/>
            <person name="Van Sluys M.A."/>
            <person name="Kitajima J.P."/>
            <person name="Truffi D."/>
            <person name="do Amaral A.M."/>
            <person name="Harakava R."/>
            <person name="de Oliveira J.C.F."/>
            <person name="Wood D."/>
            <person name="de Oliveira M.C."/>
            <person name="Miyaki C.Y."/>
            <person name="Takita M.A."/>
            <person name="da Silva A.C.R."/>
            <person name="Furlan L.R."/>
            <person name="Carraro D.M."/>
            <person name="Camarotte G."/>
            <person name="Almeida N.F. Jr."/>
            <person name="Carrer H."/>
            <person name="Coutinho L.L."/>
            <person name="El-Dorry H.A."/>
            <person name="Ferro M.I.T."/>
            <person name="Gagliardi P.R."/>
            <person name="Giglioti E."/>
            <person name="Goldman M.H.S."/>
            <person name="Goldman G.H."/>
            <person name="Kimura E.T."/>
            <person name="Ferro E.S."/>
            <person name="Kuramae E.E."/>
            <person name="Lemos E.G.M."/>
            <person name="Lemos M.V.F."/>
            <person name="Mauro S.M.Z."/>
            <person name="Machado M.A."/>
            <person name="Marino C.L."/>
            <person name="Menck C.F."/>
            <person name="Nunes L.R."/>
            <person name="Oliveira R.C."/>
            <person name="Pereira G.G."/>
            <person name="Siqueira W."/>
            <person name="de Souza A.A."/>
            <person name="Tsai S.M."/>
            <person name="Zanca A.S."/>
            <person name="Simpson A.J.G."/>
            <person name="Brumbley S.M."/>
            <person name="Setubal J.C."/>
        </authorList>
    </citation>
    <scope>NUCLEOTIDE SEQUENCE [LARGE SCALE GENOMIC DNA]</scope>
    <source>
        <strain>CTCB07</strain>
    </source>
</reference>
<accession>Q6AF79</accession>
<proteinExistence type="inferred from homology"/>
<gene>
    <name evidence="1" type="primary">metK</name>
    <name type="ordered locus">Lxx11150</name>
</gene>
<organism>
    <name type="scientific">Leifsonia xyli subsp. xyli (strain CTCB07)</name>
    <dbReference type="NCBI Taxonomy" id="281090"/>
    <lineage>
        <taxon>Bacteria</taxon>
        <taxon>Bacillati</taxon>
        <taxon>Actinomycetota</taxon>
        <taxon>Actinomycetes</taxon>
        <taxon>Micrococcales</taxon>
        <taxon>Microbacteriaceae</taxon>
        <taxon>Leifsonia</taxon>
    </lineage>
</organism>
<comment type="function">
    <text evidence="1">Catalyzes the formation of S-adenosylmethionine (AdoMet) from methionine and ATP. The overall synthetic reaction is composed of two sequential steps, AdoMet formation and the subsequent tripolyphosphate hydrolysis which occurs prior to release of AdoMet from the enzyme.</text>
</comment>
<comment type="catalytic activity">
    <reaction evidence="1">
        <text>L-methionine + ATP + H2O = S-adenosyl-L-methionine + phosphate + diphosphate</text>
        <dbReference type="Rhea" id="RHEA:21080"/>
        <dbReference type="ChEBI" id="CHEBI:15377"/>
        <dbReference type="ChEBI" id="CHEBI:30616"/>
        <dbReference type="ChEBI" id="CHEBI:33019"/>
        <dbReference type="ChEBI" id="CHEBI:43474"/>
        <dbReference type="ChEBI" id="CHEBI:57844"/>
        <dbReference type="ChEBI" id="CHEBI:59789"/>
        <dbReference type="EC" id="2.5.1.6"/>
    </reaction>
</comment>
<comment type="cofactor">
    <cofactor evidence="1">
        <name>Mg(2+)</name>
        <dbReference type="ChEBI" id="CHEBI:18420"/>
    </cofactor>
    <text evidence="1">Binds 2 divalent ions per subunit.</text>
</comment>
<comment type="cofactor">
    <cofactor evidence="1">
        <name>K(+)</name>
        <dbReference type="ChEBI" id="CHEBI:29103"/>
    </cofactor>
    <text evidence="1">Binds 1 potassium ion per subunit.</text>
</comment>
<comment type="pathway">
    <text evidence="1">Amino-acid biosynthesis; S-adenosyl-L-methionine biosynthesis; S-adenosyl-L-methionine from L-methionine: step 1/1.</text>
</comment>
<comment type="subunit">
    <text evidence="1">Homotetramer; dimer of dimers.</text>
</comment>
<comment type="subcellular location">
    <subcellularLocation>
        <location evidence="1">Cytoplasm</location>
    </subcellularLocation>
</comment>
<comment type="similarity">
    <text evidence="1">Belongs to the AdoMet synthase family.</text>
</comment>
<name>METK_LEIXX</name>
<keyword id="KW-0067">ATP-binding</keyword>
<keyword id="KW-0963">Cytoplasm</keyword>
<keyword id="KW-0460">Magnesium</keyword>
<keyword id="KW-0479">Metal-binding</keyword>
<keyword id="KW-0547">Nucleotide-binding</keyword>
<keyword id="KW-0554">One-carbon metabolism</keyword>
<keyword id="KW-0630">Potassium</keyword>
<keyword id="KW-1185">Reference proteome</keyword>
<keyword id="KW-0808">Transferase</keyword>
<dbReference type="EC" id="2.5.1.6" evidence="1"/>
<dbReference type="EMBL" id="AE016822">
    <property type="protein sequence ID" value="AAT88966.1"/>
    <property type="molecule type" value="Genomic_DNA"/>
</dbReference>
<dbReference type="RefSeq" id="WP_011185962.1">
    <property type="nucleotide sequence ID" value="NC_006087.1"/>
</dbReference>
<dbReference type="SMR" id="Q6AF79"/>
<dbReference type="STRING" id="281090.Lxx11150"/>
<dbReference type="KEGG" id="lxx:Lxx11150"/>
<dbReference type="eggNOG" id="COG0192">
    <property type="taxonomic scope" value="Bacteria"/>
</dbReference>
<dbReference type="HOGENOM" id="CLU_041802_1_1_11"/>
<dbReference type="UniPathway" id="UPA00315">
    <property type="reaction ID" value="UER00080"/>
</dbReference>
<dbReference type="Proteomes" id="UP000001306">
    <property type="component" value="Chromosome"/>
</dbReference>
<dbReference type="GO" id="GO:0005737">
    <property type="term" value="C:cytoplasm"/>
    <property type="evidence" value="ECO:0007669"/>
    <property type="project" value="UniProtKB-SubCell"/>
</dbReference>
<dbReference type="GO" id="GO:0005524">
    <property type="term" value="F:ATP binding"/>
    <property type="evidence" value="ECO:0007669"/>
    <property type="project" value="UniProtKB-UniRule"/>
</dbReference>
<dbReference type="GO" id="GO:0000287">
    <property type="term" value="F:magnesium ion binding"/>
    <property type="evidence" value="ECO:0007669"/>
    <property type="project" value="UniProtKB-UniRule"/>
</dbReference>
<dbReference type="GO" id="GO:0004478">
    <property type="term" value="F:methionine adenosyltransferase activity"/>
    <property type="evidence" value="ECO:0007669"/>
    <property type="project" value="UniProtKB-UniRule"/>
</dbReference>
<dbReference type="GO" id="GO:0006730">
    <property type="term" value="P:one-carbon metabolic process"/>
    <property type="evidence" value="ECO:0007669"/>
    <property type="project" value="UniProtKB-KW"/>
</dbReference>
<dbReference type="GO" id="GO:0006556">
    <property type="term" value="P:S-adenosylmethionine biosynthetic process"/>
    <property type="evidence" value="ECO:0007669"/>
    <property type="project" value="UniProtKB-UniRule"/>
</dbReference>
<dbReference type="CDD" id="cd18079">
    <property type="entry name" value="S-AdoMet_synt"/>
    <property type="match status" value="1"/>
</dbReference>
<dbReference type="FunFam" id="3.30.300.10:FF:000003">
    <property type="entry name" value="S-adenosylmethionine synthase"/>
    <property type="match status" value="1"/>
</dbReference>
<dbReference type="Gene3D" id="3.30.300.10">
    <property type="match status" value="3"/>
</dbReference>
<dbReference type="HAMAP" id="MF_00086">
    <property type="entry name" value="S_AdoMet_synth1"/>
    <property type="match status" value="1"/>
</dbReference>
<dbReference type="InterPro" id="IPR022631">
    <property type="entry name" value="ADOMET_SYNTHASE_CS"/>
</dbReference>
<dbReference type="InterPro" id="IPR022630">
    <property type="entry name" value="S-AdoMet_synt_C"/>
</dbReference>
<dbReference type="InterPro" id="IPR022629">
    <property type="entry name" value="S-AdoMet_synt_central"/>
</dbReference>
<dbReference type="InterPro" id="IPR022628">
    <property type="entry name" value="S-AdoMet_synt_N"/>
</dbReference>
<dbReference type="InterPro" id="IPR002133">
    <property type="entry name" value="S-AdoMet_synthetase"/>
</dbReference>
<dbReference type="InterPro" id="IPR022636">
    <property type="entry name" value="S-AdoMet_synthetase_sfam"/>
</dbReference>
<dbReference type="NCBIfam" id="TIGR01034">
    <property type="entry name" value="metK"/>
    <property type="match status" value="1"/>
</dbReference>
<dbReference type="PANTHER" id="PTHR11964">
    <property type="entry name" value="S-ADENOSYLMETHIONINE SYNTHETASE"/>
    <property type="match status" value="1"/>
</dbReference>
<dbReference type="Pfam" id="PF02773">
    <property type="entry name" value="S-AdoMet_synt_C"/>
    <property type="match status" value="1"/>
</dbReference>
<dbReference type="Pfam" id="PF02772">
    <property type="entry name" value="S-AdoMet_synt_M"/>
    <property type="match status" value="1"/>
</dbReference>
<dbReference type="Pfam" id="PF00438">
    <property type="entry name" value="S-AdoMet_synt_N"/>
    <property type="match status" value="1"/>
</dbReference>
<dbReference type="PIRSF" id="PIRSF000497">
    <property type="entry name" value="MAT"/>
    <property type="match status" value="1"/>
</dbReference>
<dbReference type="SUPFAM" id="SSF55973">
    <property type="entry name" value="S-adenosylmethionine synthetase"/>
    <property type="match status" value="3"/>
</dbReference>
<dbReference type="PROSITE" id="PS00376">
    <property type="entry name" value="ADOMET_SYNTHASE_1"/>
    <property type="match status" value="1"/>
</dbReference>
<dbReference type="PROSITE" id="PS00377">
    <property type="entry name" value="ADOMET_SYNTHASE_2"/>
    <property type="match status" value="1"/>
</dbReference>
<protein>
    <recommendedName>
        <fullName evidence="1">S-adenosylmethionine synthase</fullName>
        <shortName evidence="1">AdoMet synthase</shortName>
        <ecNumber evidence="1">2.5.1.6</ecNumber>
    </recommendedName>
    <alternativeName>
        <fullName evidence="1">MAT</fullName>
    </alternativeName>
    <alternativeName>
        <fullName evidence="1">Methionine adenosyltransferase</fullName>
    </alternativeName>
</protein>